<proteinExistence type="inferred from homology"/>
<name>MNMA2_CLOBL</name>
<sequence>MSKGTVALAMSGGVDSSVSAYILKERGYDVIGIYMDLWRDEREEYCNKSAAEDARRVAEKLDIPFHVINIEKKFKNNVIDYFIDEYLSGRTPNPCVACNKTIKFEAFFNAAKEFGADFMATGHYCKIEERNGRKVIVKAEDDKKDQTYMMYNLKQYQLERTIMPCGEYKKDHIREIAESIGLDVYNKKDSQEICFIPDNDHGGFIKRNYKRKISEGNFVDKEGNIIGKHKGIIYYTIGQRKGLGIALGKPAYVIDINPITNEVVIGEEEDIFRTELIAKDVNFIPFDKLEKPMELEAKVRYSAKPSKATIIPLENNKVKVVFQNKQRAITKGQSVVFYDKDILAGGGIIEGIV</sequence>
<organism>
    <name type="scientific">Clostridium botulinum (strain Langeland / NCTC 10281 / Type F)</name>
    <dbReference type="NCBI Taxonomy" id="441772"/>
    <lineage>
        <taxon>Bacteria</taxon>
        <taxon>Bacillati</taxon>
        <taxon>Bacillota</taxon>
        <taxon>Clostridia</taxon>
        <taxon>Eubacteriales</taxon>
        <taxon>Clostridiaceae</taxon>
        <taxon>Clostridium</taxon>
    </lineage>
</organism>
<accession>A7GHC7</accession>
<feature type="chain" id="PRO_0000349591" description="tRNA-specific 2-thiouridylase MnmA 2">
    <location>
        <begin position="1"/>
        <end position="353"/>
    </location>
</feature>
<feature type="region of interest" description="Interaction with tRNA" evidence="1">
    <location>
        <begin position="144"/>
        <end position="146"/>
    </location>
</feature>
<feature type="region of interest" description="Interaction with tRNA" evidence="1">
    <location>
        <begin position="300"/>
        <end position="301"/>
    </location>
</feature>
<feature type="active site" description="Nucleophile" evidence="1">
    <location>
        <position position="98"/>
    </location>
</feature>
<feature type="active site" description="Cysteine persulfide intermediate" evidence="1">
    <location>
        <position position="194"/>
    </location>
</feature>
<feature type="binding site" evidence="1">
    <location>
        <begin position="9"/>
        <end position="16"/>
    </location>
    <ligand>
        <name>ATP</name>
        <dbReference type="ChEBI" id="CHEBI:30616"/>
    </ligand>
</feature>
<feature type="binding site" evidence="1">
    <location>
        <position position="35"/>
    </location>
    <ligand>
        <name>ATP</name>
        <dbReference type="ChEBI" id="CHEBI:30616"/>
    </ligand>
</feature>
<feature type="binding site" evidence="1">
    <location>
        <position position="122"/>
    </location>
    <ligand>
        <name>ATP</name>
        <dbReference type="ChEBI" id="CHEBI:30616"/>
    </ligand>
</feature>
<feature type="site" description="Interaction with tRNA" evidence="1">
    <location>
        <position position="123"/>
    </location>
</feature>
<feature type="site" description="Interaction with tRNA" evidence="1">
    <location>
        <position position="333"/>
    </location>
</feature>
<feature type="disulfide bond" description="Alternate" evidence="1">
    <location>
        <begin position="98"/>
        <end position="194"/>
    </location>
</feature>
<protein>
    <recommendedName>
        <fullName evidence="1">tRNA-specific 2-thiouridylase MnmA 2</fullName>
        <ecNumber evidence="1">2.8.1.13</ecNumber>
    </recommendedName>
</protein>
<keyword id="KW-0067">ATP-binding</keyword>
<keyword id="KW-0963">Cytoplasm</keyword>
<keyword id="KW-1015">Disulfide bond</keyword>
<keyword id="KW-0547">Nucleotide-binding</keyword>
<keyword id="KW-0694">RNA-binding</keyword>
<keyword id="KW-0808">Transferase</keyword>
<keyword id="KW-0819">tRNA processing</keyword>
<keyword id="KW-0820">tRNA-binding</keyword>
<dbReference type="EC" id="2.8.1.13" evidence="1"/>
<dbReference type="EMBL" id="CP000728">
    <property type="protein sequence ID" value="ABS41171.1"/>
    <property type="molecule type" value="Genomic_DNA"/>
</dbReference>
<dbReference type="RefSeq" id="WP_012100694.1">
    <property type="nucleotide sequence ID" value="NC_009699.1"/>
</dbReference>
<dbReference type="SMR" id="A7GHC7"/>
<dbReference type="KEGG" id="cbf:CLI_2962"/>
<dbReference type="HOGENOM" id="CLU_035188_0_0_9"/>
<dbReference type="Proteomes" id="UP000002410">
    <property type="component" value="Chromosome"/>
</dbReference>
<dbReference type="GO" id="GO:0005737">
    <property type="term" value="C:cytoplasm"/>
    <property type="evidence" value="ECO:0007669"/>
    <property type="project" value="UniProtKB-SubCell"/>
</dbReference>
<dbReference type="GO" id="GO:0005524">
    <property type="term" value="F:ATP binding"/>
    <property type="evidence" value="ECO:0007669"/>
    <property type="project" value="UniProtKB-KW"/>
</dbReference>
<dbReference type="GO" id="GO:0000049">
    <property type="term" value="F:tRNA binding"/>
    <property type="evidence" value="ECO:0007669"/>
    <property type="project" value="UniProtKB-KW"/>
</dbReference>
<dbReference type="GO" id="GO:0103016">
    <property type="term" value="F:tRNA-uridine 2-sulfurtransferase activity"/>
    <property type="evidence" value="ECO:0007669"/>
    <property type="project" value="UniProtKB-EC"/>
</dbReference>
<dbReference type="GO" id="GO:0002143">
    <property type="term" value="P:tRNA wobble position uridine thiolation"/>
    <property type="evidence" value="ECO:0007669"/>
    <property type="project" value="TreeGrafter"/>
</dbReference>
<dbReference type="CDD" id="cd01998">
    <property type="entry name" value="MnmA_TRMU-like"/>
    <property type="match status" value="1"/>
</dbReference>
<dbReference type="FunFam" id="2.30.30.280:FF:000001">
    <property type="entry name" value="tRNA-specific 2-thiouridylase MnmA"/>
    <property type="match status" value="1"/>
</dbReference>
<dbReference type="FunFam" id="2.40.30.10:FF:000023">
    <property type="entry name" value="tRNA-specific 2-thiouridylase MnmA"/>
    <property type="match status" value="1"/>
</dbReference>
<dbReference type="FunFam" id="3.40.50.620:FF:000115">
    <property type="entry name" value="tRNA-specific 2-thiouridylase MnmA"/>
    <property type="match status" value="1"/>
</dbReference>
<dbReference type="Gene3D" id="2.30.30.280">
    <property type="entry name" value="Adenine nucleotide alpha hydrolases-like domains"/>
    <property type="match status" value="1"/>
</dbReference>
<dbReference type="Gene3D" id="3.40.50.620">
    <property type="entry name" value="HUPs"/>
    <property type="match status" value="1"/>
</dbReference>
<dbReference type="Gene3D" id="2.40.30.10">
    <property type="entry name" value="Translation factors"/>
    <property type="match status" value="1"/>
</dbReference>
<dbReference type="HAMAP" id="MF_00144">
    <property type="entry name" value="tRNA_thiouridyl_MnmA"/>
    <property type="match status" value="1"/>
</dbReference>
<dbReference type="InterPro" id="IPR004506">
    <property type="entry name" value="MnmA-like"/>
</dbReference>
<dbReference type="InterPro" id="IPR046885">
    <property type="entry name" value="MnmA-like_C"/>
</dbReference>
<dbReference type="InterPro" id="IPR046884">
    <property type="entry name" value="MnmA-like_central"/>
</dbReference>
<dbReference type="InterPro" id="IPR023382">
    <property type="entry name" value="MnmA-like_central_sf"/>
</dbReference>
<dbReference type="InterPro" id="IPR014729">
    <property type="entry name" value="Rossmann-like_a/b/a_fold"/>
</dbReference>
<dbReference type="NCBIfam" id="NF001138">
    <property type="entry name" value="PRK00143.1"/>
    <property type="match status" value="1"/>
</dbReference>
<dbReference type="NCBIfam" id="TIGR00420">
    <property type="entry name" value="trmU"/>
    <property type="match status" value="1"/>
</dbReference>
<dbReference type="PANTHER" id="PTHR11933:SF5">
    <property type="entry name" value="MITOCHONDRIAL TRNA-SPECIFIC 2-THIOURIDYLASE 1"/>
    <property type="match status" value="1"/>
</dbReference>
<dbReference type="PANTHER" id="PTHR11933">
    <property type="entry name" value="TRNA 5-METHYLAMINOMETHYL-2-THIOURIDYLATE -METHYLTRANSFERASE"/>
    <property type="match status" value="1"/>
</dbReference>
<dbReference type="Pfam" id="PF03054">
    <property type="entry name" value="tRNA_Me_trans"/>
    <property type="match status" value="1"/>
</dbReference>
<dbReference type="Pfam" id="PF20258">
    <property type="entry name" value="tRNA_Me_trans_C"/>
    <property type="match status" value="1"/>
</dbReference>
<dbReference type="Pfam" id="PF20259">
    <property type="entry name" value="tRNA_Me_trans_M"/>
    <property type="match status" value="1"/>
</dbReference>
<dbReference type="SUPFAM" id="SSF52402">
    <property type="entry name" value="Adenine nucleotide alpha hydrolases-like"/>
    <property type="match status" value="1"/>
</dbReference>
<reference key="1">
    <citation type="submission" date="2007-06" db="EMBL/GenBank/DDBJ databases">
        <authorList>
            <person name="Brinkac L.M."/>
            <person name="Daugherty S."/>
            <person name="Dodson R.J."/>
            <person name="Madupu R."/>
            <person name="Brown J.L."/>
            <person name="Bruce D."/>
            <person name="Detter C."/>
            <person name="Munk C."/>
            <person name="Smith L.A."/>
            <person name="Smith T.J."/>
            <person name="White O."/>
            <person name="Brettin T.S."/>
        </authorList>
    </citation>
    <scope>NUCLEOTIDE SEQUENCE [LARGE SCALE GENOMIC DNA]</scope>
    <source>
        <strain>Langeland / NCTC 10281 / Type F</strain>
    </source>
</reference>
<gene>
    <name evidence="1" type="primary">mnmA2</name>
    <name type="ordered locus">CLI_2962</name>
</gene>
<evidence type="ECO:0000255" key="1">
    <source>
        <dbReference type="HAMAP-Rule" id="MF_00144"/>
    </source>
</evidence>
<comment type="function">
    <text evidence="1">Catalyzes the 2-thiolation of uridine at the wobble position (U34) of tRNA, leading to the formation of s(2)U34.</text>
</comment>
<comment type="catalytic activity">
    <reaction evidence="1">
        <text>S-sulfanyl-L-cysteinyl-[protein] + uridine(34) in tRNA + AH2 + ATP = 2-thiouridine(34) in tRNA + L-cysteinyl-[protein] + A + AMP + diphosphate + H(+)</text>
        <dbReference type="Rhea" id="RHEA:47032"/>
        <dbReference type="Rhea" id="RHEA-COMP:10131"/>
        <dbReference type="Rhea" id="RHEA-COMP:11726"/>
        <dbReference type="Rhea" id="RHEA-COMP:11727"/>
        <dbReference type="Rhea" id="RHEA-COMP:11728"/>
        <dbReference type="ChEBI" id="CHEBI:13193"/>
        <dbReference type="ChEBI" id="CHEBI:15378"/>
        <dbReference type="ChEBI" id="CHEBI:17499"/>
        <dbReference type="ChEBI" id="CHEBI:29950"/>
        <dbReference type="ChEBI" id="CHEBI:30616"/>
        <dbReference type="ChEBI" id="CHEBI:33019"/>
        <dbReference type="ChEBI" id="CHEBI:61963"/>
        <dbReference type="ChEBI" id="CHEBI:65315"/>
        <dbReference type="ChEBI" id="CHEBI:87170"/>
        <dbReference type="ChEBI" id="CHEBI:456215"/>
        <dbReference type="EC" id="2.8.1.13"/>
    </reaction>
</comment>
<comment type="subcellular location">
    <subcellularLocation>
        <location evidence="1">Cytoplasm</location>
    </subcellularLocation>
</comment>
<comment type="similarity">
    <text evidence="1">Belongs to the MnmA/TRMU family.</text>
</comment>